<dbReference type="EMBL" id="AC004877">
    <property type="status" value="NOT_ANNOTATED_CDS"/>
    <property type="molecule type" value="Genomic_DNA"/>
</dbReference>
<dbReference type="EMBL" id="BC113087">
    <property type="protein sequence ID" value="AAI13088.1"/>
    <property type="molecule type" value="mRNA"/>
</dbReference>
<dbReference type="EMBL" id="AB011115">
    <property type="protein sequence ID" value="BAA25469.1"/>
    <property type="molecule type" value="mRNA"/>
</dbReference>
<dbReference type="CCDS" id="CCDS47741.1">
    <molecule id="O60290-1"/>
</dbReference>
<dbReference type="PIR" id="T00324">
    <property type="entry name" value="T00324"/>
</dbReference>
<dbReference type="RefSeq" id="NP_001092690.1">
    <molecule id="O60290-1"/>
    <property type="nucleotide sequence ID" value="NM_001099220.3"/>
</dbReference>
<dbReference type="BioGRID" id="568930">
    <property type="interactions" value="4"/>
</dbReference>
<dbReference type="FunCoup" id="O60290">
    <property type="interactions" value="29"/>
</dbReference>
<dbReference type="IntAct" id="O60290">
    <property type="interactions" value="5"/>
</dbReference>
<dbReference type="STRING" id="9606.ENSP00000223210"/>
<dbReference type="GlyGen" id="O60290">
    <property type="glycosylation" value="2 sites, 1 O-linked glycan (1 site)"/>
</dbReference>
<dbReference type="iPTMnet" id="O60290"/>
<dbReference type="PhosphoSitePlus" id="O60290"/>
<dbReference type="BioMuta" id="ZNF862"/>
<dbReference type="jPOST" id="O60290"/>
<dbReference type="MassIVE" id="O60290"/>
<dbReference type="PaxDb" id="9606-ENSP00000223210"/>
<dbReference type="PeptideAtlas" id="O60290"/>
<dbReference type="ProteomicsDB" id="49317">
    <molecule id="O60290-1"/>
</dbReference>
<dbReference type="Antibodypedia" id="10495">
    <property type="antibodies" value="24 antibodies from 13 providers"/>
</dbReference>
<dbReference type="DNASU" id="643641"/>
<dbReference type="Ensembl" id="ENST00000223210.5">
    <molecule id="O60290-1"/>
    <property type="protein sequence ID" value="ENSP00000223210.4"/>
    <property type="gene ID" value="ENSG00000106479.11"/>
</dbReference>
<dbReference type="GeneID" id="643641"/>
<dbReference type="KEGG" id="hsa:643641"/>
<dbReference type="MANE-Select" id="ENST00000223210.5">
    <property type="protein sequence ID" value="ENSP00000223210.4"/>
    <property type="RefSeq nucleotide sequence ID" value="NM_001099220.3"/>
    <property type="RefSeq protein sequence ID" value="NP_001092690.1"/>
</dbReference>
<dbReference type="UCSC" id="uc010lpn.4">
    <molecule id="O60290-1"/>
    <property type="organism name" value="human"/>
</dbReference>
<dbReference type="AGR" id="HGNC:34519"/>
<dbReference type="CTD" id="643641"/>
<dbReference type="DisGeNET" id="643641"/>
<dbReference type="GeneCards" id="ZNF862"/>
<dbReference type="HGNC" id="HGNC:34519">
    <property type="gene designation" value="ZNF862"/>
</dbReference>
<dbReference type="HPA" id="ENSG00000106479">
    <property type="expression patterns" value="Low tissue specificity"/>
</dbReference>
<dbReference type="MalaCards" id="ZNF862"/>
<dbReference type="MIM" id="620974">
    <property type="type" value="gene"/>
</dbReference>
<dbReference type="MIM" id="620999">
    <property type="type" value="phenotype"/>
</dbReference>
<dbReference type="neXtProt" id="NX_O60290"/>
<dbReference type="OpenTargets" id="ENSG00000106479"/>
<dbReference type="PharmGKB" id="PA164727781"/>
<dbReference type="VEuPathDB" id="HostDB:ENSG00000106479"/>
<dbReference type="eggNOG" id="KOG1721">
    <property type="taxonomic scope" value="Eukaryota"/>
</dbReference>
<dbReference type="GeneTree" id="ENSGT00940000162620"/>
<dbReference type="HOGENOM" id="CLU_283080_0_0_1"/>
<dbReference type="InParanoid" id="O60290"/>
<dbReference type="OMA" id="DQACVGI"/>
<dbReference type="OrthoDB" id="8551997at2759"/>
<dbReference type="PAN-GO" id="O60290">
    <property type="GO annotations" value="0 GO annotations based on evolutionary models"/>
</dbReference>
<dbReference type="PhylomeDB" id="O60290"/>
<dbReference type="TreeFam" id="TF350866"/>
<dbReference type="PathwayCommons" id="O60290"/>
<dbReference type="SignaLink" id="O60290"/>
<dbReference type="BioGRID-ORCS" id="643641">
    <property type="hits" value="10 hits in 1148 CRISPR screens"/>
</dbReference>
<dbReference type="GenomeRNAi" id="643641"/>
<dbReference type="Pharos" id="O60290">
    <property type="development level" value="Tdark"/>
</dbReference>
<dbReference type="PRO" id="PR:O60290"/>
<dbReference type="Proteomes" id="UP000005640">
    <property type="component" value="Chromosome 7"/>
</dbReference>
<dbReference type="RNAct" id="O60290">
    <property type="molecule type" value="protein"/>
</dbReference>
<dbReference type="Bgee" id="ENSG00000106479">
    <property type="expression patterns" value="Expressed in right uterine tube and 179 other cell types or tissues"/>
</dbReference>
<dbReference type="ExpressionAtlas" id="O60290">
    <property type="expression patterns" value="baseline and differential"/>
</dbReference>
<dbReference type="GO" id="GO:0005634">
    <property type="term" value="C:nucleus"/>
    <property type="evidence" value="ECO:0007669"/>
    <property type="project" value="UniProtKB-SubCell"/>
</dbReference>
<dbReference type="GO" id="GO:0046983">
    <property type="term" value="F:protein dimerization activity"/>
    <property type="evidence" value="ECO:0007669"/>
    <property type="project" value="InterPro"/>
</dbReference>
<dbReference type="GO" id="GO:0008270">
    <property type="term" value="F:zinc ion binding"/>
    <property type="evidence" value="ECO:0007669"/>
    <property type="project" value="UniProtKB-KW"/>
</dbReference>
<dbReference type="GO" id="GO:0006355">
    <property type="term" value="P:regulation of DNA-templated transcription"/>
    <property type="evidence" value="ECO:0007669"/>
    <property type="project" value="InterPro"/>
</dbReference>
<dbReference type="CDD" id="cd07765">
    <property type="entry name" value="KRAB_A-box"/>
    <property type="match status" value="2"/>
</dbReference>
<dbReference type="Gene3D" id="6.10.140.140">
    <property type="match status" value="2"/>
</dbReference>
<dbReference type="InterPro" id="IPR008906">
    <property type="entry name" value="HATC_C_dom"/>
</dbReference>
<dbReference type="InterPro" id="IPR001909">
    <property type="entry name" value="KRAB"/>
</dbReference>
<dbReference type="InterPro" id="IPR036051">
    <property type="entry name" value="KRAB_dom_sf"/>
</dbReference>
<dbReference type="InterPro" id="IPR012337">
    <property type="entry name" value="RNaseH-like_sf"/>
</dbReference>
<dbReference type="InterPro" id="IPR006580">
    <property type="entry name" value="Znf_TTF"/>
</dbReference>
<dbReference type="PANTHER" id="PTHR46880">
    <property type="entry name" value="RAS-ASSOCIATING DOMAIN-CONTAINING PROTEIN"/>
    <property type="match status" value="1"/>
</dbReference>
<dbReference type="PANTHER" id="PTHR46880:SF3">
    <property type="entry name" value="ZINC FINGER PROTEIN 862"/>
    <property type="match status" value="1"/>
</dbReference>
<dbReference type="Pfam" id="PF05699">
    <property type="entry name" value="Dimer_Tnp_hAT"/>
    <property type="match status" value="1"/>
</dbReference>
<dbReference type="Pfam" id="PF01352">
    <property type="entry name" value="KRAB"/>
    <property type="match status" value="2"/>
</dbReference>
<dbReference type="SMART" id="SM00349">
    <property type="entry name" value="KRAB"/>
    <property type="match status" value="2"/>
</dbReference>
<dbReference type="SMART" id="SM00597">
    <property type="entry name" value="ZnF_TTF"/>
    <property type="match status" value="2"/>
</dbReference>
<dbReference type="SUPFAM" id="SSF109640">
    <property type="entry name" value="KRAB domain (Kruppel-associated box)"/>
    <property type="match status" value="2"/>
</dbReference>
<dbReference type="SUPFAM" id="SSF53098">
    <property type="entry name" value="Ribonuclease H-like"/>
    <property type="match status" value="2"/>
</dbReference>
<dbReference type="PROSITE" id="PS50805">
    <property type="entry name" value="KRAB"/>
    <property type="match status" value="2"/>
</dbReference>
<sequence length="1169" mass="131654">MEPRESGKAPVTFDDITVYLLQEEWVLLSQQQKELCGSNKLVAPLGPTVANPELFRKFGRGPEPWLGSVQGQRSLLEHHPGKKQMGYMGEMEVQGPTRESGQSLPPQKKAYLSHLSTGSGHIEGDWAGRNRKLLKPRSIQKSWFVQFPWLIMNEEQTALFCSACREYPSIRDKRSRLIEGYTGPFKVETLKYHAKSKAHMFCVNALAARDPIWAARFRSIRDPPGDVLASPEPLFTADCPIFYPPGPLGGFDSMAELLPSSRAELEDPGGDGAIPAMYLDCISDLRQKEITDGIHSSSDINILYNDAVESCIQDPSAEGLSEEVPVVFEELPVVFEDVAVYFTREEWGMLDKRQKELYRDVMRMNYELLASLGPAAAKPDLISKLERRAAPWIKDPNGPKWGKGRPPGNKKMVAVREADTQASAADSALLPGSPVEARASCCSSSICEEGDGPRRIKRTYRPRSIQRSWFGQFPWLVIDPKETKLFCSACIERPNLHDKSSRLVRGYTGPFKVETLKYHEVSKAHRLCVNTVEIKEDTPHTALVPEISSDLMANMEHFFNAAYSIAYHSRPLNDFEKILQLLQSTGTVILGKYRNRTACTQFIKYISETLKREILEDVRNSPCVSVLLDSSTDASEQACVGIYIRYFKQMEVKESYITLAPLYSETADGYFETIVSALDELDIPFRKPGWVVGLGTDGSAMLSCRGGLVEKFQEVIPQLLPVHCVAHRLHLAVVDACGSIDLVKKCDRHIRTVFKFYQSSNKRLNELQEGAAPLEQEIIRLKDLNAVRWVASRRRTLHALLVSWPALARHLQRVAEAGGQIGHRAKGMLKLMRGFHFVKFCHFLLDFLSIYRPLSEVCQKEIVLITEVNATLGRAYVALESLRHQAGPKEEEFNASFKDGRLHGICLDKLEVAEQRFQADRERTVLTGIEYLQQRFDADRPPQLKNMEVFDTMAWPSGIELASFGNDDILNLARYFECSLPTGYSEEALLEEWLGLKTIAQHLPFSMLCKNALAQHCRFPLLSKLMAVVVCVPISTSCCERGFKAMNRIRTDERTKLSNEVLNMLMMTAVNGVAVTEYDPQPAIQHWYLTSSGRRFSHVYTCAQVPARSPASARLRKEEMGALYVEEPRTQKPPILPSREAAEVLKDCIMEPPERLLYPHTSQEAPGMS</sequence>
<gene>
    <name type="primary">ZNF862</name>
    <name type="synonym">KIAA0543</name>
</gene>
<protein>
    <recommendedName>
        <fullName>Zinc finger protein 862</fullName>
    </recommendedName>
</protein>
<feature type="chain" id="PRO_0000320644" description="Zinc finger protein 862">
    <location>
        <begin position="1"/>
        <end position="1169"/>
    </location>
</feature>
<feature type="domain" description="KRAB 1" evidence="2">
    <location>
        <begin position="11"/>
        <end position="77"/>
    </location>
</feature>
<feature type="domain" description="KRAB 2" evidence="2">
    <location>
        <begin position="333"/>
        <end position="404"/>
    </location>
</feature>
<feature type="zinc finger region" description="TTF-type 1">
    <location>
        <begin position="135"/>
        <end position="218"/>
    </location>
</feature>
<feature type="zinc finger region" description="TTF-type 2">
    <location>
        <begin position="461"/>
        <end position="544"/>
    </location>
</feature>
<feature type="splice variant" id="VSP_031702" description="In isoform 2." evidence="4">
    <location>
        <begin position="1"/>
        <end position="915"/>
    </location>
</feature>
<feature type="splice variant" id="VSP_031703" description="In isoform 2." evidence="4">
    <original>RFQADRER</original>
    <variation>MGRRWCEW</variation>
    <location>
        <begin position="916"/>
        <end position="923"/>
    </location>
</feature>
<feature type="sequence variant" id="VAR_039248" description="In dbSNP:rs3735328.">
    <original>I</original>
    <variation>T</variation>
    <location>
        <position position="178"/>
    </location>
</feature>
<feature type="sequence variant" id="VAR_090096" description="In GINGF6; likely pathogenic; dbSNP:rs1444761945." evidence="3">
    <original>A</original>
    <variation>T</variation>
    <location>
        <position position="938"/>
    </location>
</feature>
<evidence type="ECO:0000250" key="1"/>
<evidence type="ECO:0000255" key="2">
    <source>
        <dbReference type="PROSITE-ProRule" id="PRU00119"/>
    </source>
</evidence>
<evidence type="ECO:0000269" key="3">
    <source>
    </source>
</evidence>
<evidence type="ECO:0000303" key="4">
    <source>
    </source>
</evidence>
<evidence type="ECO:0000305" key="5"/>
<comment type="function">
    <text evidence="1">May be involved in transcriptional regulation.</text>
</comment>
<comment type="subcellular location">
    <subcellularLocation>
        <location evidence="5">Nucleus</location>
    </subcellularLocation>
</comment>
<comment type="alternative products">
    <event type="alternative splicing"/>
    <isoform>
        <id>O60290-1</id>
        <name>1</name>
        <sequence type="displayed"/>
    </isoform>
    <isoform>
        <id>O60290-2</id>
        <name>2</name>
        <sequence type="described" ref="VSP_031702 VSP_031703"/>
    </isoform>
</comment>
<comment type="disease" evidence="3">
    <disease id="DI-06966">
        <name>Fibromatosis, gingival, 6</name>
        <acronym>GINGF6</acronym>
        <description>An autosomal dominant form of hereditary gingival fibromatosis, a rare condition characterized by a slow, progressive overgrowth of the gingiva. The excess gingival tissue can cover part of or the entire crown, and can result in diastemas, teeth displacement, or retention of primary or impacted teeth. GINGF6 is characterized by gingival overgrowth beginning in the first decade of life.</description>
        <dbReference type="MIM" id="620999"/>
    </disease>
    <text>The disease may be caused by variants affecting the gene represented in this entry.</text>
</comment>
<accession>O60290</accession>
<accession>A0AUL8</accession>
<name>ZN862_HUMAN</name>
<keyword id="KW-0025">Alternative splicing</keyword>
<keyword id="KW-0225">Disease variant</keyword>
<keyword id="KW-0479">Metal-binding</keyword>
<keyword id="KW-0539">Nucleus</keyword>
<keyword id="KW-1267">Proteomics identification</keyword>
<keyword id="KW-1185">Reference proteome</keyword>
<keyword id="KW-0677">Repeat</keyword>
<keyword id="KW-0804">Transcription</keyword>
<keyword id="KW-0805">Transcription regulation</keyword>
<keyword id="KW-0862">Zinc</keyword>
<keyword id="KW-0863">Zinc-finger</keyword>
<reference key="1">
    <citation type="journal article" date="2003" name="Nature">
        <title>The DNA sequence of human chromosome 7.</title>
        <authorList>
            <person name="Hillier L.W."/>
            <person name="Fulton R.S."/>
            <person name="Fulton L.A."/>
            <person name="Graves T.A."/>
            <person name="Pepin K.H."/>
            <person name="Wagner-McPherson C."/>
            <person name="Layman D."/>
            <person name="Maas J."/>
            <person name="Jaeger S."/>
            <person name="Walker R."/>
            <person name="Wylie K."/>
            <person name="Sekhon M."/>
            <person name="Becker M.C."/>
            <person name="O'Laughlin M.D."/>
            <person name="Schaller M.E."/>
            <person name="Fewell G.A."/>
            <person name="Delehaunty K.D."/>
            <person name="Miner T.L."/>
            <person name="Nash W.E."/>
            <person name="Cordes M."/>
            <person name="Du H."/>
            <person name="Sun H."/>
            <person name="Edwards J."/>
            <person name="Bradshaw-Cordum H."/>
            <person name="Ali J."/>
            <person name="Andrews S."/>
            <person name="Isak A."/>
            <person name="Vanbrunt A."/>
            <person name="Nguyen C."/>
            <person name="Du F."/>
            <person name="Lamar B."/>
            <person name="Courtney L."/>
            <person name="Kalicki J."/>
            <person name="Ozersky P."/>
            <person name="Bielicki L."/>
            <person name="Scott K."/>
            <person name="Holmes A."/>
            <person name="Harkins R."/>
            <person name="Harris A."/>
            <person name="Strong C.M."/>
            <person name="Hou S."/>
            <person name="Tomlinson C."/>
            <person name="Dauphin-Kohlberg S."/>
            <person name="Kozlowicz-Reilly A."/>
            <person name="Leonard S."/>
            <person name="Rohlfing T."/>
            <person name="Rock S.M."/>
            <person name="Tin-Wollam A.-M."/>
            <person name="Abbott A."/>
            <person name="Minx P."/>
            <person name="Maupin R."/>
            <person name="Strowmatt C."/>
            <person name="Latreille P."/>
            <person name="Miller N."/>
            <person name="Johnson D."/>
            <person name="Murray J."/>
            <person name="Woessner J.P."/>
            <person name="Wendl M.C."/>
            <person name="Yang S.-P."/>
            <person name="Schultz B.R."/>
            <person name="Wallis J.W."/>
            <person name="Spieth J."/>
            <person name="Bieri T.A."/>
            <person name="Nelson J.O."/>
            <person name="Berkowicz N."/>
            <person name="Wohldmann P.E."/>
            <person name="Cook L.L."/>
            <person name="Hickenbotham M.T."/>
            <person name="Eldred J."/>
            <person name="Williams D."/>
            <person name="Bedell J.A."/>
            <person name="Mardis E.R."/>
            <person name="Clifton S.W."/>
            <person name="Chissoe S.L."/>
            <person name="Marra M.A."/>
            <person name="Raymond C."/>
            <person name="Haugen E."/>
            <person name="Gillett W."/>
            <person name="Zhou Y."/>
            <person name="James R."/>
            <person name="Phelps K."/>
            <person name="Iadanoto S."/>
            <person name="Bubb K."/>
            <person name="Simms E."/>
            <person name="Levy R."/>
            <person name="Clendenning J."/>
            <person name="Kaul R."/>
            <person name="Kent W.J."/>
            <person name="Furey T.S."/>
            <person name="Baertsch R.A."/>
            <person name="Brent M.R."/>
            <person name="Keibler E."/>
            <person name="Flicek P."/>
            <person name="Bork P."/>
            <person name="Suyama M."/>
            <person name="Bailey J.A."/>
            <person name="Portnoy M.E."/>
            <person name="Torrents D."/>
            <person name="Chinwalla A.T."/>
            <person name="Gish W.R."/>
            <person name="Eddy S.R."/>
            <person name="McPherson J.D."/>
            <person name="Olson M.V."/>
            <person name="Eichler E.E."/>
            <person name="Green E.D."/>
            <person name="Waterston R.H."/>
            <person name="Wilson R.K."/>
        </authorList>
    </citation>
    <scope>NUCLEOTIDE SEQUENCE [LARGE SCALE GENOMIC DNA]</scope>
</reference>
<reference key="2">
    <citation type="journal article" date="2004" name="Genome Res.">
        <title>The status, quality, and expansion of the NIH full-length cDNA project: the Mammalian Gene Collection (MGC).</title>
        <authorList>
            <consortium name="The MGC Project Team"/>
        </authorList>
    </citation>
    <scope>NUCLEOTIDE SEQUENCE [LARGE SCALE MRNA] (ISOFORM 2)</scope>
</reference>
<reference key="3">
    <citation type="journal article" date="1998" name="DNA Res.">
        <title>Prediction of the coding sequences of unidentified human genes. IX. The complete sequences of 100 new cDNA clones from brain which can code for large proteins in vitro.</title>
        <authorList>
            <person name="Nagase T."/>
            <person name="Ishikawa K."/>
            <person name="Miyajima N."/>
            <person name="Tanaka A."/>
            <person name="Kotani H."/>
            <person name="Nomura N."/>
            <person name="Ohara O."/>
        </authorList>
    </citation>
    <scope>NUCLEOTIDE SEQUENCE [LARGE SCALE MRNA] OF 59-1169 (ISOFORM 1)</scope>
    <source>
        <tissue>Brain</tissue>
    </source>
</reference>
<reference key="4">
    <citation type="journal article" date="2022" name="Elife">
        <title>A novel gene ZNF862 causes hereditary gingival fibromatosis.</title>
        <authorList>
            <person name="Wu J."/>
            <person name="Chen D."/>
            <person name="Huang H."/>
            <person name="Luo N."/>
            <person name="Chen H."/>
            <person name="Zhao J."/>
            <person name="Wang Y."/>
            <person name="Zhao T."/>
            <person name="Huang S."/>
            <person name="Ren Y."/>
            <person name="Zhai T."/>
            <person name="Sun W."/>
            <person name="Li H."/>
            <person name="Li W."/>
        </authorList>
    </citation>
    <scope>INVOLVEMENT IN GINGF6</scope>
    <scope>VARIANT GINGF6 THR-938</scope>
</reference>
<organism>
    <name type="scientific">Homo sapiens</name>
    <name type="common">Human</name>
    <dbReference type="NCBI Taxonomy" id="9606"/>
    <lineage>
        <taxon>Eukaryota</taxon>
        <taxon>Metazoa</taxon>
        <taxon>Chordata</taxon>
        <taxon>Craniata</taxon>
        <taxon>Vertebrata</taxon>
        <taxon>Euteleostomi</taxon>
        <taxon>Mammalia</taxon>
        <taxon>Eutheria</taxon>
        <taxon>Euarchontoglires</taxon>
        <taxon>Primates</taxon>
        <taxon>Haplorrhini</taxon>
        <taxon>Catarrhini</taxon>
        <taxon>Hominidae</taxon>
        <taxon>Homo</taxon>
    </lineage>
</organism>
<proteinExistence type="evidence at protein level"/>